<dbReference type="EMBL" id="AE016795">
    <property type="protein sequence ID" value="AAO09265.1"/>
    <property type="molecule type" value="Genomic_DNA"/>
</dbReference>
<dbReference type="RefSeq" id="WP_005528535.1">
    <property type="nucleotide sequence ID" value="NC_004459.3"/>
</dbReference>
<dbReference type="SMR" id="Q8DE44"/>
<dbReference type="GeneID" id="95678952"/>
<dbReference type="KEGG" id="vvu:VV1_0757"/>
<dbReference type="HOGENOM" id="CLU_083987_3_3_6"/>
<dbReference type="Proteomes" id="UP000002275">
    <property type="component" value="Chromosome 1"/>
</dbReference>
<dbReference type="GO" id="GO:0022625">
    <property type="term" value="C:cytosolic large ribosomal subunit"/>
    <property type="evidence" value="ECO:0007669"/>
    <property type="project" value="TreeGrafter"/>
</dbReference>
<dbReference type="GO" id="GO:0019843">
    <property type="term" value="F:rRNA binding"/>
    <property type="evidence" value="ECO:0007669"/>
    <property type="project" value="UniProtKB-UniRule"/>
</dbReference>
<dbReference type="GO" id="GO:0003735">
    <property type="term" value="F:structural constituent of ribosome"/>
    <property type="evidence" value="ECO:0007669"/>
    <property type="project" value="InterPro"/>
</dbReference>
<dbReference type="GO" id="GO:0006412">
    <property type="term" value="P:translation"/>
    <property type="evidence" value="ECO:0007669"/>
    <property type="project" value="UniProtKB-UniRule"/>
</dbReference>
<dbReference type="CDD" id="cd00336">
    <property type="entry name" value="Ribosomal_L22"/>
    <property type="match status" value="1"/>
</dbReference>
<dbReference type="FunFam" id="3.90.470.10:FF:000001">
    <property type="entry name" value="50S ribosomal protein L22"/>
    <property type="match status" value="1"/>
</dbReference>
<dbReference type="Gene3D" id="3.90.470.10">
    <property type="entry name" value="Ribosomal protein L22/L17"/>
    <property type="match status" value="1"/>
</dbReference>
<dbReference type="HAMAP" id="MF_01331_B">
    <property type="entry name" value="Ribosomal_uL22_B"/>
    <property type="match status" value="1"/>
</dbReference>
<dbReference type="InterPro" id="IPR001063">
    <property type="entry name" value="Ribosomal_uL22"/>
</dbReference>
<dbReference type="InterPro" id="IPR005727">
    <property type="entry name" value="Ribosomal_uL22_bac/chlpt-type"/>
</dbReference>
<dbReference type="InterPro" id="IPR047867">
    <property type="entry name" value="Ribosomal_uL22_bac/org-type"/>
</dbReference>
<dbReference type="InterPro" id="IPR018260">
    <property type="entry name" value="Ribosomal_uL22_CS"/>
</dbReference>
<dbReference type="InterPro" id="IPR036394">
    <property type="entry name" value="Ribosomal_uL22_sf"/>
</dbReference>
<dbReference type="NCBIfam" id="TIGR01044">
    <property type="entry name" value="rplV_bact"/>
    <property type="match status" value="1"/>
</dbReference>
<dbReference type="PANTHER" id="PTHR13501">
    <property type="entry name" value="CHLOROPLAST 50S RIBOSOMAL PROTEIN L22-RELATED"/>
    <property type="match status" value="1"/>
</dbReference>
<dbReference type="PANTHER" id="PTHR13501:SF8">
    <property type="entry name" value="LARGE RIBOSOMAL SUBUNIT PROTEIN UL22M"/>
    <property type="match status" value="1"/>
</dbReference>
<dbReference type="Pfam" id="PF00237">
    <property type="entry name" value="Ribosomal_L22"/>
    <property type="match status" value="1"/>
</dbReference>
<dbReference type="SUPFAM" id="SSF54843">
    <property type="entry name" value="Ribosomal protein L22"/>
    <property type="match status" value="1"/>
</dbReference>
<dbReference type="PROSITE" id="PS00464">
    <property type="entry name" value="RIBOSOMAL_L22"/>
    <property type="match status" value="1"/>
</dbReference>
<proteinExistence type="inferred from homology"/>
<protein>
    <recommendedName>
        <fullName evidence="1">Large ribosomal subunit protein uL22</fullName>
    </recommendedName>
    <alternativeName>
        <fullName evidence="2">50S ribosomal protein L22</fullName>
    </alternativeName>
</protein>
<name>RL22_VIBVU</name>
<sequence>MEAIAKHNFARISPQKARLVADLIRGKSVDQALEILTFSNKKAAVLVKKVLESAIANAEHNEGADIDDLNVAKIFVDEGPTMKRIMPRAKGRADRILKRSSHITVVVADR</sequence>
<keyword id="KW-0687">Ribonucleoprotein</keyword>
<keyword id="KW-0689">Ribosomal protein</keyword>
<keyword id="KW-0694">RNA-binding</keyword>
<keyword id="KW-0699">rRNA-binding</keyword>
<feature type="chain" id="PRO_0000125260" description="Large ribosomal subunit protein uL22">
    <location>
        <begin position="1"/>
        <end position="110"/>
    </location>
</feature>
<evidence type="ECO:0000255" key="1">
    <source>
        <dbReference type="HAMAP-Rule" id="MF_01331"/>
    </source>
</evidence>
<evidence type="ECO:0000305" key="2"/>
<comment type="function">
    <text evidence="1">This protein binds specifically to 23S rRNA; its binding is stimulated by other ribosomal proteins, e.g. L4, L17, and L20. It is important during the early stages of 50S assembly. It makes multiple contacts with different domains of the 23S rRNA in the assembled 50S subunit and ribosome (By similarity).</text>
</comment>
<comment type="function">
    <text evidence="1">The globular domain of the protein is located near the polypeptide exit tunnel on the outside of the subunit, while an extended beta-hairpin is found that lines the wall of the exit tunnel in the center of the 70S ribosome.</text>
</comment>
<comment type="subunit">
    <text evidence="1">Part of the 50S ribosomal subunit.</text>
</comment>
<comment type="similarity">
    <text evidence="1">Belongs to the universal ribosomal protein uL22 family.</text>
</comment>
<reference key="1">
    <citation type="submission" date="2002-12" db="EMBL/GenBank/DDBJ databases">
        <title>Complete genome sequence of Vibrio vulnificus CMCP6.</title>
        <authorList>
            <person name="Rhee J.H."/>
            <person name="Kim S.Y."/>
            <person name="Chung S.S."/>
            <person name="Kim J.J."/>
            <person name="Moon Y.H."/>
            <person name="Jeong H."/>
            <person name="Choy H.E."/>
        </authorList>
    </citation>
    <scope>NUCLEOTIDE SEQUENCE [LARGE SCALE GENOMIC DNA]</scope>
    <source>
        <strain>CMCP6</strain>
    </source>
</reference>
<organism>
    <name type="scientific">Vibrio vulnificus (strain CMCP6)</name>
    <dbReference type="NCBI Taxonomy" id="216895"/>
    <lineage>
        <taxon>Bacteria</taxon>
        <taxon>Pseudomonadati</taxon>
        <taxon>Pseudomonadota</taxon>
        <taxon>Gammaproteobacteria</taxon>
        <taxon>Vibrionales</taxon>
        <taxon>Vibrionaceae</taxon>
        <taxon>Vibrio</taxon>
    </lineage>
</organism>
<accession>Q8DE44</accession>
<gene>
    <name evidence="1" type="primary">rplV</name>
    <name type="ordered locus">VV1_0757</name>
</gene>